<accession>Q2N811</accession>
<evidence type="ECO:0000255" key="1">
    <source>
        <dbReference type="HAMAP-Rule" id="MF_00031"/>
    </source>
</evidence>
<name>RUVA_ERYLH</name>
<sequence length="200" mass="20167">MIAKLKGLLDETGTDWAVIDVSGVGYLVHCSSKSLAALGEVGEACTVYTDLQVSENDMRLLGFAEASERDWFRLLTQVQGVGSKVALAILSALSTEEVQTACANGDAAMVARAQGVGPKLAGRIVNELKDKAGALPSAPGGAAMAANPAGGASADAVSALENLGFKPAIAARAVATAQGELGEGASESELIRVALKRAAG</sequence>
<gene>
    <name evidence="1" type="primary">ruvA</name>
    <name type="ordered locus">ELI_10440</name>
</gene>
<proteinExistence type="inferred from homology"/>
<protein>
    <recommendedName>
        <fullName evidence="1">Holliday junction branch migration complex subunit RuvA</fullName>
    </recommendedName>
</protein>
<dbReference type="EMBL" id="CP000157">
    <property type="protein sequence ID" value="ABC64180.1"/>
    <property type="molecule type" value="Genomic_DNA"/>
</dbReference>
<dbReference type="RefSeq" id="WP_011415007.1">
    <property type="nucleotide sequence ID" value="NC_007722.1"/>
</dbReference>
<dbReference type="SMR" id="Q2N811"/>
<dbReference type="STRING" id="314225.ELI_10440"/>
<dbReference type="KEGG" id="eli:ELI_10440"/>
<dbReference type="eggNOG" id="COG0632">
    <property type="taxonomic scope" value="Bacteria"/>
</dbReference>
<dbReference type="HOGENOM" id="CLU_087936_3_0_5"/>
<dbReference type="OrthoDB" id="5293449at2"/>
<dbReference type="Proteomes" id="UP000008808">
    <property type="component" value="Chromosome"/>
</dbReference>
<dbReference type="GO" id="GO:0005737">
    <property type="term" value="C:cytoplasm"/>
    <property type="evidence" value="ECO:0007669"/>
    <property type="project" value="UniProtKB-SubCell"/>
</dbReference>
<dbReference type="GO" id="GO:0009379">
    <property type="term" value="C:Holliday junction helicase complex"/>
    <property type="evidence" value="ECO:0007669"/>
    <property type="project" value="InterPro"/>
</dbReference>
<dbReference type="GO" id="GO:0048476">
    <property type="term" value="C:Holliday junction resolvase complex"/>
    <property type="evidence" value="ECO:0007669"/>
    <property type="project" value="UniProtKB-UniRule"/>
</dbReference>
<dbReference type="GO" id="GO:0005524">
    <property type="term" value="F:ATP binding"/>
    <property type="evidence" value="ECO:0007669"/>
    <property type="project" value="InterPro"/>
</dbReference>
<dbReference type="GO" id="GO:0000400">
    <property type="term" value="F:four-way junction DNA binding"/>
    <property type="evidence" value="ECO:0007669"/>
    <property type="project" value="UniProtKB-UniRule"/>
</dbReference>
<dbReference type="GO" id="GO:0009378">
    <property type="term" value="F:four-way junction helicase activity"/>
    <property type="evidence" value="ECO:0007669"/>
    <property type="project" value="InterPro"/>
</dbReference>
<dbReference type="GO" id="GO:0006310">
    <property type="term" value="P:DNA recombination"/>
    <property type="evidence" value="ECO:0007669"/>
    <property type="project" value="UniProtKB-UniRule"/>
</dbReference>
<dbReference type="GO" id="GO:0006281">
    <property type="term" value="P:DNA repair"/>
    <property type="evidence" value="ECO:0007669"/>
    <property type="project" value="UniProtKB-UniRule"/>
</dbReference>
<dbReference type="Gene3D" id="1.10.150.20">
    <property type="entry name" value="5' to 3' exonuclease, C-terminal subdomain"/>
    <property type="match status" value="1"/>
</dbReference>
<dbReference type="Gene3D" id="1.10.8.10">
    <property type="entry name" value="DNA helicase RuvA subunit, C-terminal domain"/>
    <property type="match status" value="1"/>
</dbReference>
<dbReference type="Gene3D" id="2.40.50.140">
    <property type="entry name" value="Nucleic acid-binding proteins"/>
    <property type="match status" value="1"/>
</dbReference>
<dbReference type="HAMAP" id="MF_00031">
    <property type="entry name" value="DNA_HJ_migration_RuvA"/>
    <property type="match status" value="1"/>
</dbReference>
<dbReference type="InterPro" id="IPR013849">
    <property type="entry name" value="DNA_helicase_Holl-junc_RuvA_I"/>
</dbReference>
<dbReference type="InterPro" id="IPR003583">
    <property type="entry name" value="Hlx-hairpin-Hlx_DNA-bd_motif"/>
</dbReference>
<dbReference type="InterPro" id="IPR012340">
    <property type="entry name" value="NA-bd_OB-fold"/>
</dbReference>
<dbReference type="InterPro" id="IPR000085">
    <property type="entry name" value="RuvA"/>
</dbReference>
<dbReference type="InterPro" id="IPR010994">
    <property type="entry name" value="RuvA_2-like"/>
</dbReference>
<dbReference type="InterPro" id="IPR011114">
    <property type="entry name" value="RuvA_C"/>
</dbReference>
<dbReference type="InterPro" id="IPR036267">
    <property type="entry name" value="RuvA_C_sf"/>
</dbReference>
<dbReference type="NCBIfam" id="TIGR00084">
    <property type="entry name" value="ruvA"/>
    <property type="match status" value="1"/>
</dbReference>
<dbReference type="Pfam" id="PF14520">
    <property type="entry name" value="HHH_5"/>
    <property type="match status" value="1"/>
</dbReference>
<dbReference type="Pfam" id="PF07499">
    <property type="entry name" value="RuvA_C"/>
    <property type="match status" value="1"/>
</dbReference>
<dbReference type="Pfam" id="PF01330">
    <property type="entry name" value="RuvA_N"/>
    <property type="match status" value="1"/>
</dbReference>
<dbReference type="SMART" id="SM00278">
    <property type="entry name" value="HhH1"/>
    <property type="match status" value="2"/>
</dbReference>
<dbReference type="SUPFAM" id="SSF46929">
    <property type="entry name" value="DNA helicase RuvA subunit, C-terminal domain"/>
    <property type="match status" value="1"/>
</dbReference>
<dbReference type="SUPFAM" id="SSF50249">
    <property type="entry name" value="Nucleic acid-binding proteins"/>
    <property type="match status" value="1"/>
</dbReference>
<dbReference type="SUPFAM" id="SSF47781">
    <property type="entry name" value="RuvA domain 2-like"/>
    <property type="match status" value="1"/>
</dbReference>
<keyword id="KW-0963">Cytoplasm</keyword>
<keyword id="KW-0227">DNA damage</keyword>
<keyword id="KW-0233">DNA recombination</keyword>
<keyword id="KW-0234">DNA repair</keyword>
<keyword id="KW-0238">DNA-binding</keyword>
<keyword id="KW-1185">Reference proteome</keyword>
<comment type="function">
    <text evidence="1">The RuvA-RuvB-RuvC complex processes Holliday junction (HJ) DNA during genetic recombination and DNA repair, while the RuvA-RuvB complex plays an important role in the rescue of blocked DNA replication forks via replication fork reversal (RFR). RuvA specifically binds to HJ cruciform DNA, conferring on it an open structure. The RuvB hexamer acts as an ATP-dependent pump, pulling dsDNA into and through the RuvAB complex. HJ branch migration allows RuvC to scan DNA until it finds its consensus sequence, where it cleaves and resolves the cruciform DNA.</text>
</comment>
<comment type="subunit">
    <text evidence="1">Homotetramer. Forms an RuvA(8)-RuvB(12)-Holliday junction (HJ) complex. HJ DNA is sandwiched between 2 RuvA tetramers; dsDNA enters through RuvA and exits via RuvB. An RuvB hexamer assembles on each DNA strand where it exits the tetramer. Each RuvB hexamer is contacted by two RuvA subunits (via domain III) on 2 adjacent RuvB subunits; this complex drives branch migration. In the full resolvosome a probable DNA-RuvA(4)-RuvB(12)-RuvC(2) complex forms which resolves the HJ.</text>
</comment>
<comment type="subcellular location">
    <subcellularLocation>
        <location evidence="1">Cytoplasm</location>
    </subcellularLocation>
</comment>
<comment type="domain">
    <text evidence="1">Has three domains with a flexible linker between the domains II and III and assumes an 'L' shape. Domain III is highly mobile and contacts RuvB.</text>
</comment>
<comment type="similarity">
    <text evidence="1">Belongs to the RuvA family.</text>
</comment>
<reference key="1">
    <citation type="journal article" date="2009" name="J. Bacteriol.">
        <title>Complete genome sequence of Erythrobacter litoralis HTCC2594.</title>
        <authorList>
            <person name="Oh H.M."/>
            <person name="Giovannoni S.J."/>
            <person name="Ferriera S."/>
            <person name="Johnson J."/>
            <person name="Cho J.C."/>
        </authorList>
    </citation>
    <scope>NUCLEOTIDE SEQUENCE [LARGE SCALE GENOMIC DNA]</scope>
    <source>
        <strain>HTCC2594</strain>
    </source>
</reference>
<feature type="chain" id="PRO_1000002447" description="Holliday junction branch migration complex subunit RuvA">
    <location>
        <begin position="1"/>
        <end position="200"/>
    </location>
</feature>
<feature type="region of interest" description="Domain I" evidence="1">
    <location>
        <begin position="1"/>
        <end position="64"/>
    </location>
</feature>
<feature type="region of interest" description="Domain II" evidence="1">
    <location>
        <begin position="65"/>
        <end position="143"/>
    </location>
</feature>
<feature type="region of interest" description="Flexible linker" evidence="1">
    <location>
        <begin position="144"/>
        <end position="154"/>
    </location>
</feature>
<feature type="region of interest" description="Domain III" evidence="1">
    <location>
        <begin position="154"/>
        <end position="200"/>
    </location>
</feature>
<organism>
    <name type="scientific">Erythrobacter litoralis (strain HTCC2594)</name>
    <dbReference type="NCBI Taxonomy" id="314225"/>
    <lineage>
        <taxon>Bacteria</taxon>
        <taxon>Pseudomonadati</taxon>
        <taxon>Pseudomonadota</taxon>
        <taxon>Alphaproteobacteria</taxon>
        <taxon>Sphingomonadales</taxon>
        <taxon>Erythrobacteraceae</taxon>
        <taxon>Erythrobacter/Porphyrobacter group</taxon>
        <taxon>Erythrobacter</taxon>
    </lineage>
</organism>